<protein>
    <recommendedName>
        <fullName evidence="1">Probable phosphoglycerate mutase GpmB</fullName>
        <ecNumber evidence="1">5.4.2.-</ecNumber>
    </recommendedName>
    <alternativeName>
        <fullName evidence="1">PGAM</fullName>
    </alternativeName>
    <alternativeName>
        <fullName evidence="1">Phosphoglyceromutase</fullName>
    </alternativeName>
</protein>
<gene>
    <name evidence="1" type="primary">gpmB</name>
    <name type="ordered locus">PMI3716</name>
</gene>
<accession>B4EY52</accession>
<evidence type="ECO:0000255" key="1">
    <source>
        <dbReference type="HAMAP-Rule" id="MF_01040"/>
    </source>
</evidence>
<reference key="1">
    <citation type="journal article" date="2008" name="J. Bacteriol.">
        <title>Complete genome sequence of uropathogenic Proteus mirabilis, a master of both adherence and motility.</title>
        <authorList>
            <person name="Pearson M.M."/>
            <person name="Sebaihia M."/>
            <person name="Churcher C."/>
            <person name="Quail M.A."/>
            <person name="Seshasayee A.S."/>
            <person name="Luscombe N.M."/>
            <person name="Abdellah Z."/>
            <person name="Arrosmith C."/>
            <person name="Atkin B."/>
            <person name="Chillingworth T."/>
            <person name="Hauser H."/>
            <person name="Jagels K."/>
            <person name="Moule S."/>
            <person name="Mungall K."/>
            <person name="Norbertczak H."/>
            <person name="Rabbinowitsch E."/>
            <person name="Walker D."/>
            <person name="Whithead S."/>
            <person name="Thomson N.R."/>
            <person name="Rather P.N."/>
            <person name="Parkhill J."/>
            <person name="Mobley H.L.T."/>
        </authorList>
    </citation>
    <scope>NUCLEOTIDE SEQUENCE [LARGE SCALE GENOMIC DNA]</scope>
    <source>
        <strain>HI4320</strain>
    </source>
</reference>
<sequence>MLQVYLVRHGETEWNVARRIQGQSDSPLTAMGVRQAQQVAERVKSAGITHIISSDLGRTCQTAEIIAQACRCDVITDPRLRELDMGVLEQREIATLNTQEEAWRKSLIDGTPDGRIPQGESMVELANRMQAALNSCLALPEHSRPLLVSHGIALGCLLSTVLGLPAYAERRLRLRNCSISRVDYQNSPWLANGWVIETAGDVSHLTDIALDEVQR</sequence>
<keyword id="KW-0324">Glycolysis</keyword>
<keyword id="KW-0413">Isomerase</keyword>
<keyword id="KW-1185">Reference proteome</keyword>
<feature type="chain" id="PRO_1000136010" description="Probable phosphoglycerate mutase GpmB">
    <location>
        <begin position="1"/>
        <end position="215"/>
    </location>
</feature>
<feature type="active site" description="Tele-phosphohistidine intermediate" evidence="1">
    <location>
        <position position="9"/>
    </location>
</feature>
<feature type="active site" description="Proton donor/acceptor" evidence="1">
    <location>
        <position position="82"/>
    </location>
</feature>
<feature type="binding site" evidence="1">
    <location>
        <begin position="8"/>
        <end position="15"/>
    </location>
    <ligand>
        <name>substrate</name>
    </ligand>
</feature>
<feature type="binding site" evidence="1">
    <location>
        <begin position="21"/>
        <end position="22"/>
    </location>
    <ligand>
        <name>substrate</name>
    </ligand>
</feature>
<feature type="binding site" evidence="1">
    <location>
        <position position="58"/>
    </location>
    <ligand>
        <name>substrate</name>
    </ligand>
</feature>
<feature type="binding site" evidence="1">
    <location>
        <begin position="82"/>
        <end position="85"/>
    </location>
    <ligand>
        <name>substrate</name>
    </ligand>
</feature>
<feature type="binding site" evidence="1">
    <location>
        <begin position="151"/>
        <end position="152"/>
    </location>
    <ligand>
        <name>substrate</name>
    </ligand>
</feature>
<feature type="site" description="Transition state stabilizer" evidence="1">
    <location>
        <position position="150"/>
    </location>
</feature>
<dbReference type="EC" id="5.4.2.-" evidence="1"/>
<dbReference type="EMBL" id="AM942759">
    <property type="protein sequence ID" value="CAR47242.1"/>
    <property type="molecule type" value="Genomic_DNA"/>
</dbReference>
<dbReference type="RefSeq" id="WP_004245229.1">
    <property type="nucleotide sequence ID" value="NC_010554.1"/>
</dbReference>
<dbReference type="SMR" id="B4EY52"/>
<dbReference type="EnsemblBacteria" id="CAR47242">
    <property type="protein sequence ID" value="CAR47242"/>
    <property type="gene ID" value="PMI3716"/>
</dbReference>
<dbReference type="GeneID" id="6802497"/>
<dbReference type="KEGG" id="pmr:PMI3716"/>
<dbReference type="eggNOG" id="COG0406">
    <property type="taxonomic scope" value="Bacteria"/>
</dbReference>
<dbReference type="HOGENOM" id="CLU_033323_9_5_6"/>
<dbReference type="UniPathway" id="UPA00109">
    <property type="reaction ID" value="UER00186"/>
</dbReference>
<dbReference type="Proteomes" id="UP000008319">
    <property type="component" value="Chromosome"/>
</dbReference>
<dbReference type="GO" id="GO:0005737">
    <property type="term" value="C:cytoplasm"/>
    <property type="evidence" value="ECO:0007669"/>
    <property type="project" value="TreeGrafter"/>
</dbReference>
<dbReference type="GO" id="GO:0016791">
    <property type="term" value="F:phosphatase activity"/>
    <property type="evidence" value="ECO:0007669"/>
    <property type="project" value="TreeGrafter"/>
</dbReference>
<dbReference type="GO" id="GO:0004619">
    <property type="term" value="F:phosphoglycerate mutase activity"/>
    <property type="evidence" value="ECO:0007669"/>
    <property type="project" value="UniProtKB-UniRule"/>
</dbReference>
<dbReference type="GO" id="GO:0006096">
    <property type="term" value="P:glycolytic process"/>
    <property type="evidence" value="ECO:0007669"/>
    <property type="project" value="UniProtKB-UniRule"/>
</dbReference>
<dbReference type="CDD" id="cd07067">
    <property type="entry name" value="HP_PGM_like"/>
    <property type="match status" value="1"/>
</dbReference>
<dbReference type="Gene3D" id="3.40.50.1240">
    <property type="entry name" value="Phosphoglycerate mutase-like"/>
    <property type="match status" value="1"/>
</dbReference>
<dbReference type="HAMAP" id="MF_01040">
    <property type="entry name" value="PGAM_GpmB"/>
    <property type="match status" value="1"/>
</dbReference>
<dbReference type="InterPro" id="IPR013078">
    <property type="entry name" value="His_Pase_superF_clade-1"/>
</dbReference>
<dbReference type="InterPro" id="IPR029033">
    <property type="entry name" value="His_PPase_superfam"/>
</dbReference>
<dbReference type="InterPro" id="IPR001345">
    <property type="entry name" value="PG/BPGM_mutase_AS"/>
</dbReference>
<dbReference type="InterPro" id="IPR050275">
    <property type="entry name" value="PGM_Phosphatase"/>
</dbReference>
<dbReference type="InterPro" id="IPR023086">
    <property type="entry name" value="Phosphoglycerate_mutase_GpmB"/>
</dbReference>
<dbReference type="NCBIfam" id="NF002901">
    <property type="entry name" value="PRK03482.1"/>
    <property type="match status" value="1"/>
</dbReference>
<dbReference type="PANTHER" id="PTHR48100">
    <property type="entry name" value="BROAD-SPECIFICITY PHOSPHATASE YOR283W-RELATED"/>
    <property type="match status" value="1"/>
</dbReference>
<dbReference type="PANTHER" id="PTHR48100:SF1">
    <property type="entry name" value="HISTIDINE PHOSPHATASE FAMILY PROTEIN-RELATED"/>
    <property type="match status" value="1"/>
</dbReference>
<dbReference type="Pfam" id="PF00300">
    <property type="entry name" value="His_Phos_1"/>
    <property type="match status" value="1"/>
</dbReference>
<dbReference type="SMART" id="SM00855">
    <property type="entry name" value="PGAM"/>
    <property type="match status" value="1"/>
</dbReference>
<dbReference type="SUPFAM" id="SSF53254">
    <property type="entry name" value="Phosphoglycerate mutase-like"/>
    <property type="match status" value="1"/>
</dbReference>
<dbReference type="PROSITE" id="PS00175">
    <property type="entry name" value="PG_MUTASE"/>
    <property type="match status" value="1"/>
</dbReference>
<organism>
    <name type="scientific">Proteus mirabilis (strain HI4320)</name>
    <dbReference type="NCBI Taxonomy" id="529507"/>
    <lineage>
        <taxon>Bacteria</taxon>
        <taxon>Pseudomonadati</taxon>
        <taxon>Pseudomonadota</taxon>
        <taxon>Gammaproteobacteria</taxon>
        <taxon>Enterobacterales</taxon>
        <taxon>Morganellaceae</taxon>
        <taxon>Proteus</taxon>
    </lineage>
</organism>
<comment type="catalytic activity">
    <reaction evidence="1">
        <text>(2R)-2-phosphoglycerate = (2R)-3-phosphoglycerate</text>
        <dbReference type="Rhea" id="RHEA:15901"/>
        <dbReference type="ChEBI" id="CHEBI:58272"/>
        <dbReference type="ChEBI" id="CHEBI:58289"/>
    </reaction>
</comment>
<comment type="pathway">
    <text evidence="1">Carbohydrate degradation; glycolysis; pyruvate from D-glyceraldehyde 3-phosphate: step 3/5.</text>
</comment>
<comment type="similarity">
    <text evidence="1">Belongs to the phosphoglycerate mutase family. GpmB subfamily.</text>
</comment>
<proteinExistence type="inferred from homology"/>
<name>GPMB_PROMH</name>